<sequence>MIISRGSHVDEEPVAKKPRISVGEMTDDTTDDGLNTEEIRAPYTTEEMDEPEKAALLPKIPKKSPVSIGMNPENGKYVLPNYSKDESLNARKFLKYYGLRKFLDTYLPEELNSLYIYSLIKLLGFEIRDKELLSSLYRFFHPVKSSDQFKLEYEDFTDPLEKKEAVKLIKDLQKAINRVLATRIRLSNFYTIDHFVSKIKKAERILVLTGAGVSTSLGIPDFRSSEGFYSKIQHLGLDDPQDVFNYDIFMQDPSVFYNIAHMILPPENMYSPLHSFIKMLQDKGKLLRNYTQNIDNLESYAGIDPEKLVQCHGSFATASCVTCHWQIPGEKIFSNIRSMELPLCPYCYQKRREYFPNTGDEEYDTLKGNLESGIQNNNFALKSYGVLKPDITFFGEALPSKFHKTIREDIMKCDLLICIGTSLKVAPVSEIVNMIPAYVPQVLINKDPVKHAEFDIELLGFCDDVATVVAQKCEWDIPHKDWEGKLKKKRFDVNEIERGVFNIEAGSPE</sequence>
<keyword id="KW-0479">Metal-binding</keyword>
<keyword id="KW-0520">NAD</keyword>
<keyword id="KW-0539">Nucleus</keyword>
<keyword id="KW-1185">Reference proteome</keyword>
<keyword id="KW-0678">Repressor</keyword>
<keyword id="KW-0804">Transcription</keyword>
<keyword id="KW-0805">Transcription regulation</keyword>
<keyword id="KW-0808">Transferase</keyword>
<keyword id="KW-0862">Zinc</keyword>
<gene>
    <name type="primary">SIR2</name>
    <name type="ordered locus">CAGL0C05357g</name>
</gene>
<proteinExistence type="inferred from homology"/>
<protein>
    <recommendedName>
        <fullName>NAD-dependent histone deacetylase SIR2</fullName>
        <ecNumber evidence="2">2.3.1.286</ecNumber>
    </recommendedName>
    <alternativeName>
        <fullName>Regulatory protein SIR2</fullName>
    </alternativeName>
    <alternativeName>
        <fullName>Silent information regulator 2</fullName>
    </alternativeName>
</protein>
<feature type="chain" id="PRO_0000110276" description="NAD-dependent histone deacetylase SIR2">
    <location>
        <begin position="1"/>
        <end position="509"/>
    </location>
</feature>
<feature type="domain" description="Deacetylase sirtuin-type" evidence="2">
    <location>
        <begin position="185"/>
        <end position="476"/>
    </location>
</feature>
<feature type="region of interest" description="Disordered" evidence="3">
    <location>
        <begin position="1"/>
        <end position="35"/>
    </location>
</feature>
<feature type="compositionally biased region" description="Acidic residues" evidence="3">
    <location>
        <begin position="25"/>
        <end position="35"/>
    </location>
</feature>
<feature type="active site" description="Proton acceptor" evidence="2">
    <location>
        <position position="312"/>
    </location>
</feature>
<feature type="binding site" evidence="1">
    <location>
        <begin position="210"/>
        <end position="229"/>
    </location>
    <ligand>
        <name>NAD(+)</name>
        <dbReference type="ChEBI" id="CHEBI:57540"/>
    </ligand>
</feature>
<feature type="binding site" evidence="1">
    <location>
        <begin position="292"/>
        <end position="295"/>
    </location>
    <ligand>
        <name>NAD(+)</name>
        <dbReference type="ChEBI" id="CHEBI:57540"/>
    </ligand>
</feature>
<feature type="binding site" evidence="2">
    <location>
        <position position="320"/>
    </location>
    <ligand>
        <name>Zn(2+)</name>
        <dbReference type="ChEBI" id="CHEBI:29105"/>
    </ligand>
</feature>
<feature type="binding site" evidence="2">
    <location>
        <position position="323"/>
    </location>
    <ligand>
        <name>Zn(2+)</name>
        <dbReference type="ChEBI" id="CHEBI:29105"/>
    </ligand>
</feature>
<feature type="binding site" evidence="2">
    <location>
        <position position="344"/>
    </location>
    <ligand>
        <name>Zn(2+)</name>
        <dbReference type="ChEBI" id="CHEBI:29105"/>
    </ligand>
</feature>
<feature type="binding site" evidence="2">
    <location>
        <position position="347"/>
    </location>
    <ligand>
        <name>Zn(2+)</name>
        <dbReference type="ChEBI" id="CHEBI:29105"/>
    </ligand>
</feature>
<feature type="binding site" evidence="1">
    <location>
        <begin position="420"/>
        <end position="422"/>
    </location>
    <ligand>
        <name>NAD(+)</name>
        <dbReference type="ChEBI" id="CHEBI:57540"/>
    </ligand>
</feature>
<feature type="binding site" evidence="1">
    <location>
        <begin position="445"/>
        <end position="447"/>
    </location>
    <ligand>
        <name>NAD(+)</name>
        <dbReference type="ChEBI" id="CHEBI:57540"/>
    </ligand>
</feature>
<feature type="binding site" evidence="1">
    <location>
        <position position="462"/>
    </location>
    <ligand>
        <name>NAD(+)</name>
        <dbReference type="ChEBI" id="CHEBI:57540"/>
    </ligand>
</feature>
<organism>
    <name type="scientific">Candida glabrata (strain ATCC 2001 / BCRC 20586 / JCM 3761 / NBRC 0622 / NRRL Y-65 / CBS 138)</name>
    <name type="common">Yeast</name>
    <name type="synonym">Nakaseomyces glabratus</name>
    <dbReference type="NCBI Taxonomy" id="284593"/>
    <lineage>
        <taxon>Eukaryota</taxon>
        <taxon>Fungi</taxon>
        <taxon>Dikarya</taxon>
        <taxon>Ascomycota</taxon>
        <taxon>Saccharomycotina</taxon>
        <taxon>Saccharomycetes</taxon>
        <taxon>Saccharomycetales</taxon>
        <taxon>Saccharomycetaceae</taxon>
        <taxon>Nakaseomyces</taxon>
    </lineage>
</organism>
<evidence type="ECO:0000250" key="1"/>
<evidence type="ECO:0000255" key="2">
    <source>
        <dbReference type="PROSITE-ProRule" id="PRU00236"/>
    </source>
</evidence>
<evidence type="ECO:0000256" key="3">
    <source>
        <dbReference type="SAM" id="MobiDB-lite"/>
    </source>
</evidence>
<evidence type="ECO:0000305" key="4"/>
<dbReference type="EC" id="2.3.1.286" evidence="2"/>
<dbReference type="EMBL" id="CR380949">
    <property type="protein sequence ID" value="CAG58313.1"/>
    <property type="molecule type" value="Genomic_DNA"/>
</dbReference>
<dbReference type="SMR" id="Q6FWI7"/>
<dbReference type="FunCoup" id="Q6FWI7">
    <property type="interactions" value="165"/>
</dbReference>
<dbReference type="STRING" id="284593.Q6FWI7"/>
<dbReference type="EnsemblFungi" id="CAGL0C05357g-T">
    <property type="protein sequence ID" value="CAGL0C05357g-T-p1"/>
    <property type="gene ID" value="CAGL0C05357g"/>
</dbReference>
<dbReference type="KEGG" id="cgr:2886842"/>
<dbReference type="CGD" id="CAL0127390">
    <property type="gene designation" value="HST1"/>
</dbReference>
<dbReference type="VEuPathDB" id="FungiDB:CAGL0C05357g"/>
<dbReference type="eggNOG" id="KOG2684">
    <property type="taxonomic scope" value="Eukaryota"/>
</dbReference>
<dbReference type="HOGENOM" id="CLU_023643_5_0_1"/>
<dbReference type="InParanoid" id="Q6FWI7"/>
<dbReference type="OMA" id="FHKTIRK"/>
<dbReference type="Proteomes" id="UP000002428">
    <property type="component" value="Chromosome C"/>
</dbReference>
<dbReference type="GO" id="GO:0034967">
    <property type="term" value="C:Set3 complex"/>
    <property type="evidence" value="ECO:0007669"/>
    <property type="project" value="EnsemblFungi"/>
</dbReference>
<dbReference type="GO" id="GO:0004407">
    <property type="term" value="F:histone deacetylase activity"/>
    <property type="evidence" value="ECO:0000314"/>
    <property type="project" value="CGD"/>
</dbReference>
<dbReference type="GO" id="GO:0046970">
    <property type="term" value="F:histone H4K16 deacetylase activity, NAD-dependent"/>
    <property type="evidence" value="ECO:0007669"/>
    <property type="project" value="TreeGrafter"/>
</dbReference>
<dbReference type="GO" id="GO:0046872">
    <property type="term" value="F:metal ion binding"/>
    <property type="evidence" value="ECO:0007669"/>
    <property type="project" value="UniProtKB-KW"/>
</dbReference>
<dbReference type="GO" id="GO:0070403">
    <property type="term" value="F:NAD+ binding"/>
    <property type="evidence" value="ECO:0007669"/>
    <property type="project" value="InterPro"/>
</dbReference>
<dbReference type="GO" id="GO:0045835">
    <property type="term" value="P:negative regulation of meiotic nuclear division"/>
    <property type="evidence" value="ECO:0007669"/>
    <property type="project" value="EnsemblFungi"/>
</dbReference>
<dbReference type="GO" id="GO:0045950">
    <property type="term" value="P:negative regulation of mitotic recombination"/>
    <property type="evidence" value="ECO:0007669"/>
    <property type="project" value="EnsemblFungi"/>
</dbReference>
<dbReference type="GO" id="GO:0070623">
    <property type="term" value="P:regulation of thiamine biosynthetic process"/>
    <property type="evidence" value="ECO:0007669"/>
    <property type="project" value="EnsemblFungi"/>
</dbReference>
<dbReference type="GO" id="GO:0030466">
    <property type="term" value="P:silent mating-type cassette heterochromatin formation"/>
    <property type="evidence" value="ECO:0007669"/>
    <property type="project" value="EnsemblFungi"/>
</dbReference>
<dbReference type="CDD" id="cd01408">
    <property type="entry name" value="SIRT1"/>
    <property type="match status" value="1"/>
</dbReference>
<dbReference type="Gene3D" id="1.20.120.1710">
    <property type="match status" value="1"/>
</dbReference>
<dbReference type="Gene3D" id="3.30.1600.10">
    <property type="entry name" value="SIR2/SIRT2 'Small Domain"/>
    <property type="match status" value="1"/>
</dbReference>
<dbReference type="Gene3D" id="3.40.50.1220">
    <property type="entry name" value="TPP-binding domain"/>
    <property type="match status" value="1"/>
</dbReference>
<dbReference type="InterPro" id="IPR029035">
    <property type="entry name" value="DHS-like_NAD/FAD-binding_dom"/>
</dbReference>
<dbReference type="InterPro" id="IPR007654">
    <property type="entry name" value="NAD-dep_histone_deAcase_SIR2_N"/>
</dbReference>
<dbReference type="InterPro" id="IPR050134">
    <property type="entry name" value="NAD-dep_sirtuin_deacylases"/>
</dbReference>
<dbReference type="InterPro" id="IPR003000">
    <property type="entry name" value="Sirtuin"/>
</dbReference>
<dbReference type="InterPro" id="IPR026591">
    <property type="entry name" value="Sirtuin_cat_small_dom_sf"/>
</dbReference>
<dbReference type="InterPro" id="IPR026590">
    <property type="entry name" value="Ssirtuin_cat_dom"/>
</dbReference>
<dbReference type="PANTHER" id="PTHR11085:SF9">
    <property type="entry name" value="NAD-DEPENDENT PROTEIN DEACETYLASE SIRTUIN-1"/>
    <property type="match status" value="1"/>
</dbReference>
<dbReference type="PANTHER" id="PTHR11085">
    <property type="entry name" value="NAD-DEPENDENT PROTEIN DEACYLASE SIRTUIN-5, MITOCHONDRIAL-RELATED"/>
    <property type="match status" value="1"/>
</dbReference>
<dbReference type="Pfam" id="PF04574">
    <property type="entry name" value="DUF592"/>
    <property type="match status" value="1"/>
</dbReference>
<dbReference type="Pfam" id="PF02146">
    <property type="entry name" value="SIR2"/>
    <property type="match status" value="1"/>
</dbReference>
<dbReference type="SUPFAM" id="SSF52467">
    <property type="entry name" value="DHS-like NAD/FAD-binding domain"/>
    <property type="match status" value="1"/>
</dbReference>
<dbReference type="PROSITE" id="PS50305">
    <property type="entry name" value="SIRTUIN"/>
    <property type="match status" value="1"/>
</dbReference>
<name>SIR2_CANGA</name>
<reference key="1">
    <citation type="journal article" date="2004" name="Nature">
        <title>Genome evolution in yeasts.</title>
        <authorList>
            <person name="Dujon B."/>
            <person name="Sherman D."/>
            <person name="Fischer G."/>
            <person name="Durrens P."/>
            <person name="Casaregola S."/>
            <person name="Lafontaine I."/>
            <person name="de Montigny J."/>
            <person name="Marck C."/>
            <person name="Neuveglise C."/>
            <person name="Talla E."/>
            <person name="Goffard N."/>
            <person name="Frangeul L."/>
            <person name="Aigle M."/>
            <person name="Anthouard V."/>
            <person name="Babour A."/>
            <person name="Barbe V."/>
            <person name="Barnay S."/>
            <person name="Blanchin S."/>
            <person name="Beckerich J.-M."/>
            <person name="Beyne E."/>
            <person name="Bleykasten C."/>
            <person name="Boisrame A."/>
            <person name="Boyer J."/>
            <person name="Cattolico L."/>
            <person name="Confanioleri F."/>
            <person name="de Daruvar A."/>
            <person name="Despons L."/>
            <person name="Fabre E."/>
            <person name="Fairhead C."/>
            <person name="Ferry-Dumazet H."/>
            <person name="Groppi A."/>
            <person name="Hantraye F."/>
            <person name="Hennequin C."/>
            <person name="Jauniaux N."/>
            <person name="Joyet P."/>
            <person name="Kachouri R."/>
            <person name="Kerrest A."/>
            <person name="Koszul R."/>
            <person name="Lemaire M."/>
            <person name="Lesur I."/>
            <person name="Ma L."/>
            <person name="Muller H."/>
            <person name="Nicaud J.-M."/>
            <person name="Nikolski M."/>
            <person name="Oztas S."/>
            <person name="Ozier-Kalogeropoulos O."/>
            <person name="Pellenz S."/>
            <person name="Potier S."/>
            <person name="Richard G.-F."/>
            <person name="Straub M.-L."/>
            <person name="Suleau A."/>
            <person name="Swennen D."/>
            <person name="Tekaia F."/>
            <person name="Wesolowski-Louvel M."/>
            <person name="Westhof E."/>
            <person name="Wirth B."/>
            <person name="Zeniou-Meyer M."/>
            <person name="Zivanovic Y."/>
            <person name="Bolotin-Fukuhara M."/>
            <person name="Thierry A."/>
            <person name="Bouchier C."/>
            <person name="Caudron B."/>
            <person name="Scarpelli C."/>
            <person name="Gaillardin C."/>
            <person name="Weissenbach J."/>
            <person name="Wincker P."/>
            <person name="Souciet J.-L."/>
        </authorList>
    </citation>
    <scope>NUCLEOTIDE SEQUENCE [LARGE SCALE GENOMIC DNA]</scope>
    <source>
        <strain>ATCC 2001 / BCRC 20586 / JCM 3761 / NBRC 0622 / NRRL Y-65 / CBS 138</strain>
    </source>
</reference>
<accession>Q6FWI7</accession>
<comment type="function">
    <text evidence="1">NAD-dependent deacetylase. Heterochromatin component that silences transcription at silent mating loci, telomeres and the ribosomal DNA, and that also suppresses recombination in the rDNA and extends replicative life span. It acts as a NAD-dependent histone deacetylase, which deacetylates 'Lys-9' and 'Lys-14' of Histone H3 and 'Lys-16' of Histone H4 (By similarity).</text>
</comment>
<comment type="catalytic activity">
    <reaction evidence="2">
        <text>N(6)-acetyl-L-lysyl-[protein] + NAD(+) + H2O = 2''-O-acetyl-ADP-D-ribose + nicotinamide + L-lysyl-[protein]</text>
        <dbReference type="Rhea" id="RHEA:43636"/>
        <dbReference type="Rhea" id="RHEA-COMP:9752"/>
        <dbReference type="Rhea" id="RHEA-COMP:10731"/>
        <dbReference type="ChEBI" id="CHEBI:15377"/>
        <dbReference type="ChEBI" id="CHEBI:17154"/>
        <dbReference type="ChEBI" id="CHEBI:29969"/>
        <dbReference type="ChEBI" id="CHEBI:57540"/>
        <dbReference type="ChEBI" id="CHEBI:61930"/>
        <dbReference type="ChEBI" id="CHEBI:83767"/>
        <dbReference type="EC" id="2.3.1.286"/>
    </reaction>
</comment>
<comment type="cofactor">
    <cofactor evidence="1">
        <name>Zn(2+)</name>
        <dbReference type="ChEBI" id="CHEBI:29105"/>
    </cofactor>
    <text evidence="1">Binds 1 zinc ion per subunit.</text>
</comment>
<comment type="subcellular location">
    <subcellularLocation>
        <location evidence="1">Nucleus</location>
    </subcellularLocation>
</comment>
<comment type="similarity">
    <text evidence="4">Belongs to the sirtuin family. Class I subfamily.</text>
</comment>